<name>AKIP1_HUMAN</name>
<reference key="1">
    <citation type="journal article" date="2003" name="Biochim. Biophys. Acta">
        <title>Characterization of a novel human breast cancer associated gene (BCA3) encoding an alternatively spliced proline-rich protein.</title>
        <authorList>
            <person name="Kitching R."/>
            <person name="Li H."/>
            <person name="Wong M.J."/>
            <person name="Kanaganayakam S."/>
            <person name="Kahn H."/>
            <person name="Seth A."/>
        </authorList>
    </citation>
    <scope>NUCLEOTIDE SEQUENCE [MRNA] (ISOFORMS 1; 2 AND 3)</scope>
    <scope>TISSUE SPECIFICITY</scope>
    <source>
        <tissue>Lymph node</tissue>
    </source>
</reference>
<reference key="2">
    <citation type="journal article" date="2001" name="Cytogenet. Cell Genet.">
        <title>Comparative genomic sequencing reveals a strikingly similar architecture of a conserved syntenic region on human chromosome 11p15.3 (including gene ST5) and mouse chromosome 7.</title>
        <authorList>
            <person name="Amid C."/>
            <person name="Bahr A."/>
            <person name="Mujica A."/>
            <person name="Sampson N."/>
            <person name="Bikar S.E."/>
            <person name="Winterpacht A."/>
            <person name="Zabel B."/>
            <person name="Hankeln T."/>
            <person name="Schmidt E.R."/>
        </authorList>
    </citation>
    <scope>NUCLEOTIDE SEQUENCE [GENOMIC DNA] (ISOFORM 1)</scope>
</reference>
<reference key="3">
    <citation type="journal article" date="2004" name="Nat. Genet.">
        <title>Complete sequencing and characterization of 21,243 full-length human cDNAs.</title>
        <authorList>
            <person name="Ota T."/>
            <person name="Suzuki Y."/>
            <person name="Nishikawa T."/>
            <person name="Otsuki T."/>
            <person name="Sugiyama T."/>
            <person name="Irie R."/>
            <person name="Wakamatsu A."/>
            <person name="Hayashi K."/>
            <person name="Sato H."/>
            <person name="Nagai K."/>
            <person name="Kimura K."/>
            <person name="Makita H."/>
            <person name="Sekine M."/>
            <person name="Obayashi M."/>
            <person name="Nishi T."/>
            <person name="Shibahara T."/>
            <person name="Tanaka T."/>
            <person name="Ishii S."/>
            <person name="Yamamoto J."/>
            <person name="Saito K."/>
            <person name="Kawai Y."/>
            <person name="Isono Y."/>
            <person name="Nakamura Y."/>
            <person name="Nagahari K."/>
            <person name="Murakami K."/>
            <person name="Yasuda T."/>
            <person name="Iwayanagi T."/>
            <person name="Wagatsuma M."/>
            <person name="Shiratori A."/>
            <person name="Sudo H."/>
            <person name="Hosoiri T."/>
            <person name="Kaku Y."/>
            <person name="Kodaira H."/>
            <person name="Kondo H."/>
            <person name="Sugawara M."/>
            <person name="Takahashi M."/>
            <person name="Kanda K."/>
            <person name="Yokoi T."/>
            <person name="Furuya T."/>
            <person name="Kikkawa E."/>
            <person name="Omura Y."/>
            <person name="Abe K."/>
            <person name="Kamihara K."/>
            <person name="Katsuta N."/>
            <person name="Sato K."/>
            <person name="Tanikawa M."/>
            <person name="Yamazaki M."/>
            <person name="Ninomiya K."/>
            <person name="Ishibashi T."/>
            <person name="Yamashita H."/>
            <person name="Murakawa K."/>
            <person name="Fujimori K."/>
            <person name="Tanai H."/>
            <person name="Kimata M."/>
            <person name="Watanabe M."/>
            <person name="Hiraoka S."/>
            <person name="Chiba Y."/>
            <person name="Ishida S."/>
            <person name="Ono Y."/>
            <person name="Takiguchi S."/>
            <person name="Watanabe S."/>
            <person name="Yosida M."/>
            <person name="Hotuta T."/>
            <person name="Kusano J."/>
            <person name="Kanehori K."/>
            <person name="Takahashi-Fujii A."/>
            <person name="Hara H."/>
            <person name="Tanase T.-O."/>
            <person name="Nomura Y."/>
            <person name="Togiya S."/>
            <person name="Komai F."/>
            <person name="Hara R."/>
            <person name="Takeuchi K."/>
            <person name="Arita M."/>
            <person name="Imose N."/>
            <person name="Musashino K."/>
            <person name="Yuuki H."/>
            <person name="Oshima A."/>
            <person name="Sasaki N."/>
            <person name="Aotsuka S."/>
            <person name="Yoshikawa Y."/>
            <person name="Matsunawa H."/>
            <person name="Ichihara T."/>
            <person name="Shiohata N."/>
            <person name="Sano S."/>
            <person name="Moriya S."/>
            <person name="Momiyama H."/>
            <person name="Satoh N."/>
            <person name="Takami S."/>
            <person name="Terashima Y."/>
            <person name="Suzuki O."/>
            <person name="Nakagawa S."/>
            <person name="Senoh A."/>
            <person name="Mizoguchi H."/>
            <person name="Goto Y."/>
            <person name="Shimizu F."/>
            <person name="Wakebe H."/>
            <person name="Hishigaki H."/>
            <person name="Watanabe T."/>
            <person name="Sugiyama A."/>
            <person name="Takemoto M."/>
            <person name="Kawakami B."/>
            <person name="Yamazaki M."/>
            <person name="Watanabe K."/>
            <person name="Kumagai A."/>
            <person name="Itakura S."/>
            <person name="Fukuzumi Y."/>
            <person name="Fujimori Y."/>
            <person name="Komiyama M."/>
            <person name="Tashiro H."/>
            <person name="Tanigami A."/>
            <person name="Fujiwara T."/>
            <person name="Ono T."/>
            <person name="Yamada K."/>
            <person name="Fujii Y."/>
            <person name="Ozaki K."/>
            <person name="Hirao M."/>
            <person name="Ohmori Y."/>
            <person name="Kawabata A."/>
            <person name="Hikiji T."/>
            <person name="Kobatake N."/>
            <person name="Inagaki H."/>
            <person name="Ikema Y."/>
            <person name="Okamoto S."/>
            <person name="Okitani R."/>
            <person name="Kawakami T."/>
            <person name="Noguchi S."/>
            <person name="Itoh T."/>
            <person name="Shigeta K."/>
            <person name="Senba T."/>
            <person name="Matsumura K."/>
            <person name="Nakajima Y."/>
            <person name="Mizuno T."/>
            <person name="Morinaga M."/>
            <person name="Sasaki M."/>
            <person name="Togashi T."/>
            <person name="Oyama M."/>
            <person name="Hata H."/>
            <person name="Watanabe M."/>
            <person name="Komatsu T."/>
            <person name="Mizushima-Sugano J."/>
            <person name="Satoh T."/>
            <person name="Shirai Y."/>
            <person name="Takahashi Y."/>
            <person name="Nakagawa K."/>
            <person name="Okumura K."/>
            <person name="Nagase T."/>
            <person name="Nomura N."/>
            <person name="Kikuchi H."/>
            <person name="Masuho Y."/>
            <person name="Yamashita R."/>
            <person name="Nakai K."/>
            <person name="Yada T."/>
            <person name="Nakamura Y."/>
            <person name="Ohara O."/>
            <person name="Isogai T."/>
            <person name="Sugano S."/>
        </authorList>
    </citation>
    <scope>NUCLEOTIDE SEQUENCE [LARGE SCALE MRNA] (ISOFORM 1)</scope>
    <scope>VARIANT LYS-23</scope>
</reference>
<reference key="4">
    <citation type="journal article" date="2004" name="Genome Res.">
        <title>The status, quality, and expansion of the NIH full-length cDNA project: the Mammalian Gene Collection (MGC).</title>
        <authorList>
            <consortium name="The MGC Project Team"/>
        </authorList>
    </citation>
    <scope>NUCLEOTIDE SEQUENCE [LARGE SCALE MRNA] (ISOFORM 1)</scope>
    <scope>VARIANT LYS-23</scope>
    <source>
        <tissue>Kidney</tissue>
    </source>
</reference>
<reference key="5">
    <citation type="journal article" date="2005" name="Proc. Natl. Acad. Sci. U.S.A.">
        <title>A-kinase-interacting protein localizes protein kinase A in the nucleus.</title>
        <authorList>
            <person name="Sastri M."/>
            <person name="Barraclough D.M."/>
            <person name="Carmichael P.T."/>
            <person name="Taylor S.S."/>
        </authorList>
    </citation>
    <scope>TISSUE SPECIFICITY</scope>
    <scope>SUBCELLULAR LOCATION</scope>
    <scope>INTERACTION WITH PRKACA</scope>
</reference>
<reference key="6">
    <citation type="journal article" date="2008" name="J. Biol. Chem.">
        <title>AKIP1 enhances NF-kappaB-dependent gene expression by promoting the nuclear retention and phosphorylation of p65.</title>
        <authorList>
            <person name="Gao N."/>
            <person name="Asamitsu K."/>
            <person name="Hibi Y."/>
            <person name="Ueno T."/>
            <person name="Okamoto T."/>
        </authorList>
    </citation>
    <scope>FUNCTION</scope>
    <scope>INTERACTION WITH RELA</scope>
    <scope>SUBCELLULAR LOCATION</scope>
</reference>
<reference key="7">
    <citation type="journal article" date="2010" name="J. Biol. Chem.">
        <title>A-kinase-interacting protein 1 (AKIP1) acts as a molecular determinant of PKA in NF-kappaB signaling.</title>
        <authorList>
            <person name="Gao N."/>
            <person name="Hibi Y."/>
            <person name="Cueno M."/>
            <person name="Asamitsu K."/>
            <person name="Okamoto T."/>
        </authorList>
    </citation>
    <scope>FUNCTION</scope>
</reference>
<protein>
    <recommendedName>
        <fullName>A-kinase-interacting protein 1</fullName>
    </recommendedName>
    <alternativeName>
        <fullName>Breast cancer-associated gene 3 protein</fullName>
    </alternativeName>
    <alternativeName>
        <fullName>PKA-interacting protein</fullName>
    </alternativeName>
    <alternativeName>
        <fullName>Proline-rich protein BCA3</fullName>
    </alternativeName>
</protein>
<keyword id="KW-0025">Alternative splicing</keyword>
<keyword id="KW-0539">Nucleus</keyword>
<keyword id="KW-1267">Proteomics identification</keyword>
<keyword id="KW-0656">Proto-oncogene</keyword>
<keyword id="KW-1185">Reference proteome</keyword>
<feature type="chain" id="PRO_0000064857" description="A-kinase-interacting protein 1">
    <location>
        <begin position="1"/>
        <end position="210"/>
    </location>
</feature>
<feature type="region of interest" description="Disordered" evidence="1">
    <location>
        <begin position="58"/>
        <end position="80"/>
    </location>
</feature>
<feature type="region of interest" description="Disordered" evidence="1">
    <location>
        <begin position="136"/>
        <end position="162"/>
    </location>
</feature>
<feature type="splice variant" id="VSP_013275" description="In isoform 3." evidence="8">
    <location>
        <begin position="75"/>
        <end position="101"/>
    </location>
</feature>
<feature type="splice variant" id="VSP_013276" description="In isoform 2." evidence="8">
    <location>
        <begin position="137"/>
        <end position="163"/>
    </location>
</feature>
<feature type="sequence variant" id="VAR_021565" description="In dbSNP:rs1133833." evidence="3 4">
    <original>R</original>
    <variation>K</variation>
    <location>
        <position position="23"/>
    </location>
</feature>
<feature type="sequence variant" id="VAR_050688" description="In dbSNP:rs35131475.">
    <original>I</original>
    <variation>T</variation>
    <location>
        <position position="132"/>
    </location>
</feature>
<feature type="sequence conflict" description="In Ref. 4; BAC11537." evidence="9" ref="4">
    <original>A</original>
    <variation>T</variation>
    <location>
        <position position="41"/>
    </location>
</feature>
<feature type="sequence conflict" description="In Ref. 4; BAC11537." evidence="9" ref="4">
    <original>F</original>
    <variation>S</variation>
    <location>
        <position position="92"/>
    </location>
</feature>
<organism>
    <name type="scientific">Homo sapiens</name>
    <name type="common">Human</name>
    <dbReference type="NCBI Taxonomy" id="9606"/>
    <lineage>
        <taxon>Eukaryota</taxon>
        <taxon>Metazoa</taxon>
        <taxon>Chordata</taxon>
        <taxon>Craniata</taxon>
        <taxon>Vertebrata</taxon>
        <taxon>Euteleostomi</taxon>
        <taxon>Mammalia</taxon>
        <taxon>Eutheria</taxon>
        <taxon>Euarchontoglires</taxon>
        <taxon>Primates</taxon>
        <taxon>Haplorrhini</taxon>
        <taxon>Catarrhini</taxon>
        <taxon>Hominidae</taxon>
        <taxon>Homo</taxon>
    </lineage>
</organism>
<comment type="function">
    <text evidence="6 7">Enhances NF-kappa-B transcriptional activity by regulating the nuclear localization of the NF-kappa-B subunit RELA and promoting the phosphorylation of RELA by PRKACA. Regulates the effect of the cAMP-dependent protein kinase signaling pathway on the NF-kappa-B activation cascade.</text>
</comment>
<comment type="subunit">
    <text evidence="5 6">Interacts with PRKACA and RELA.</text>
</comment>
<comment type="interaction">
    <interactant intactId="EBI-517035">
        <id>Q9NQ31</id>
    </interactant>
    <interactant intactId="EBI-348399">
        <id>P22607</id>
        <label>FGFR3</label>
    </interactant>
    <organismsDiffer>false</organismsDiffer>
    <experiments>3</experiments>
</comment>
<comment type="interaction">
    <interactant intactId="EBI-517035">
        <id>Q9NQ31</id>
    </interactant>
    <interactant intactId="EBI-701903">
        <id>Q14192</id>
        <label>FHL2</label>
    </interactant>
    <organismsDiffer>false</organismsDiffer>
    <experiments>3</experiments>
</comment>
<comment type="interaction">
    <interactant intactId="EBI-517035">
        <id>Q9NQ31</id>
    </interactant>
    <interactant intactId="EBI-351506">
        <id>P06396</id>
        <label>GSN</label>
    </interactant>
    <organismsDiffer>false</organismsDiffer>
    <experiments>3</experiments>
</comment>
<comment type="interaction">
    <interactant intactId="EBI-517035">
        <id>Q9NQ31</id>
    </interactant>
    <interactant intactId="EBI-476586">
        <id>P17612</id>
        <label>PRKACA</label>
    </interactant>
    <organismsDiffer>false</organismsDiffer>
    <experiments>4</experiments>
</comment>
<comment type="interaction">
    <interactant intactId="EBI-517035">
        <id>Q9NQ31</id>
    </interactant>
    <interactant intactId="EBI-25900580">
        <id>Q9Y649</id>
    </interactant>
    <organismsDiffer>false</organismsDiffer>
    <experiments>3</experiments>
</comment>
<comment type="subcellular location">
    <subcellularLocation>
        <location evidence="5 6">Nucleus</location>
    </subcellularLocation>
    <text>Locates to punctate spots.</text>
</comment>
<comment type="alternative products">
    <event type="alternative splicing"/>
    <isoform>
        <id>Q9NQ31-1</id>
        <name>1</name>
        <name>1a</name>
        <sequence type="displayed"/>
    </isoform>
    <isoform>
        <id>Q9NQ31-2</id>
        <name>2</name>
        <sequence type="described" ref="VSP_013276"/>
    </isoform>
    <isoform>
        <id>Q9NQ31-3</id>
        <name>3</name>
        <name>1b</name>
        <sequence type="described" ref="VSP_013275"/>
    </isoform>
</comment>
<comment type="tissue specificity">
    <text evidence="2 5">Expressed at high levels in adult heart and at lower levels in brain, testis, ovary and skeletal muscle. Up-regulated in some breast cancer cell lines. Isoform 1 and isoform 3 are expressed in fetal brain.</text>
</comment>
<sequence length="210" mass="23114">MDNCLAAAALNGVDRRSLQRSARLALEVLERAKRRAVDWHALERPKGCMGVLAREAPHLEKQPAAGPQRVLPGEREERPPTLSASFRTMAEFMDYTSSQCGKYYSSVPEEGGATHVYRYHRGESKLHMCLDIGNGQRKDRKKTSLGPGGSYQISEHAPEASQPAENISKDLYIEVYPGTYSVTVGSNDLTKKTHVVAVDSGQSVDLVFPV</sequence>
<gene>
    <name type="primary">AKIP1</name>
    <name type="synonym">BCA3</name>
    <name type="synonym">C11orf17</name>
</gene>
<accession>Q9NQ31</accession>
<accession>Q8NBS2</accession>
<accession>Q8TAC6</accession>
<accession>Q8TAD3</accession>
<accession>Q8TAE0</accession>
<evidence type="ECO:0000256" key="1">
    <source>
        <dbReference type="SAM" id="MobiDB-lite"/>
    </source>
</evidence>
<evidence type="ECO:0000269" key="2">
    <source>
    </source>
</evidence>
<evidence type="ECO:0000269" key="3">
    <source>
    </source>
</evidence>
<evidence type="ECO:0000269" key="4">
    <source>
    </source>
</evidence>
<evidence type="ECO:0000269" key="5">
    <source>
    </source>
</evidence>
<evidence type="ECO:0000269" key="6">
    <source>
    </source>
</evidence>
<evidence type="ECO:0000269" key="7">
    <source>
    </source>
</evidence>
<evidence type="ECO:0000303" key="8">
    <source>
    </source>
</evidence>
<evidence type="ECO:0000305" key="9"/>
<dbReference type="EMBL" id="AF493783">
    <property type="protein sequence ID" value="AAM12862.1"/>
    <property type="molecule type" value="mRNA"/>
</dbReference>
<dbReference type="EMBL" id="AF493784">
    <property type="protein sequence ID" value="AAM12863.1"/>
    <property type="molecule type" value="mRNA"/>
</dbReference>
<dbReference type="EMBL" id="AF493785">
    <property type="protein sequence ID" value="AAM12864.1"/>
    <property type="molecule type" value="mRNA"/>
</dbReference>
<dbReference type="EMBL" id="AF493786">
    <property type="protein sequence ID" value="AAM12865.1"/>
    <property type="molecule type" value="Genomic_DNA"/>
</dbReference>
<dbReference type="EMBL" id="AF493786">
    <property type="protein sequence ID" value="AAM12866.1"/>
    <property type="molecule type" value="Genomic_DNA"/>
</dbReference>
<dbReference type="EMBL" id="AF493786">
    <property type="protein sequence ID" value="AAM12867.1"/>
    <property type="molecule type" value="Genomic_DNA"/>
</dbReference>
<dbReference type="EMBL" id="AF512007">
    <property type="protein sequence ID" value="AAM34785.1"/>
    <property type="molecule type" value="mRNA"/>
</dbReference>
<dbReference type="EMBL" id="AJ400877">
    <property type="protein sequence ID" value="CAB92290.1"/>
    <property type="molecule type" value="Genomic_DNA"/>
</dbReference>
<dbReference type="EMBL" id="AK075308">
    <property type="protein sequence ID" value="BAC11537.1"/>
    <property type="molecule type" value="mRNA"/>
</dbReference>
<dbReference type="EMBL" id="BC030996">
    <property type="protein sequence ID" value="AAH30996.1"/>
    <property type="molecule type" value="mRNA"/>
</dbReference>
<dbReference type="CCDS" id="CCDS55743.1">
    <molecule id="Q9NQ31-2"/>
</dbReference>
<dbReference type="CCDS" id="CCDS55744.1">
    <molecule id="Q9NQ31-3"/>
</dbReference>
<dbReference type="CCDS" id="CCDS7793.1">
    <molecule id="Q9NQ31-1"/>
</dbReference>
<dbReference type="RefSeq" id="NP_001193575.1">
    <molecule id="Q9NQ31-3"/>
    <property type="nucleotide sequence ID" value="NM_001206646.2"/>
</dbReference>
<dbReference type="RefSeq" id="NP_001193576.1">
    <molecule id="Q9NQ31-2"/>
    <property type="nucleotide sequence ID" value="NM_001206647.2"/>
</dbReference>
<dbReference type="RefSeq" id="NP_001193577.1">
    <property type="nucleotide sequence ID" value="NM_001206648.1"/>
</dbReference>
<dbReference type="RefSeq" id="NP_065693.2">
    <molecule id="Q9NQ31-1"/>
    <property type="nucleotide sequence ID" value="NM_020642.3"/>
</dbReference>
<dbReference type="RefSeq" id="XP_016873500.1">
    <molecule id="Q9NQ31-1"/>
    <property type="nucleotide sequence ID" value="XM_017018011.2"/>
</dbReference>
<dbReference type="RefSeq" id="XP_047283217.1">
    <molecule id="Q9NQ31-3"/>
    <property type="nucleotide sequence ID" value="XM_047427261.1"/>
</dbReference>
<dbReference type="RefSeq" id="XP_054225340.1">
    <molecule id="Q9NQ31-1"/>
    <property type="nucleotide sequence ID" value="XM_054369365.1"/>
</dbReference>
<dbReference type="RefSeq" id="XP_054225341.1">
    <molecule id="Q9NQ31-3"/>
    <property type="nucleotide sequence ID" value="XM_054369366.1"/>
</dbReference>
<dbReference type="BioGRID" id="121180">
    <property type="interactions" value="22"/>
</dbReference>
<dbReference type="FunCoup" id="Q9NQ31">
    <property type="interactions" value="1100"/>
</dbReference>
<dbReference type="IntAct" id="Q9NQ31">
    <property type="interactions" value="15"/>
</dbReference>
<dbReference type="MINT" id="Q9NQ31"/>
<dbReference type="STRING" id="9606.ENSP00000310459"/>
<dbReference type="GlyGen" id="Q9NQ31">
    <property type="glycosylation" value="1 site"/>
</dbReference>
<dbReference type="iPTMnet" id="Q9NQ31"/>
<dbReference type="PhosphoSitePlus" id="Q9NQ31"/>
<dbReference type="BioMuta" id="AKIP1"/>
<dbReference type="jPOST" id="Q9NQ31"/>
<dbReference type="MassIVE" id="Q9NQ31"/>
<dbReference type="PaxDb" id="9606-ENSP00000310459"/>
<dbReference type="PeptideAtlas" id="Q9NQ31"/>
<dbReference type="ProteomicsDB" id="82063">
    <molecule id="Q9NQ31-1"/>
</dbReference>
<dbReference type="ProteomicsDB" id="82064">
    <molecule id="Q9NQ31-2"/>
</dbReference>
<dbReference type="ProteomicsDB" id="82065">
    <molecule id="Q9NQ31-3"/>
</dbReference>
<dbReference type="Antibodypedia" id="24164">
    <property type="antibodies" value="240 antibodies from 26 providers"/>
</dbReference>
<dbReference type="DNASU" id="56672"/>
<dbReference type="Ensembl" id="ENST00000299576.9">
    <molecule id="Q9NQ31-3"/>
    <property type="protein sequence ID" value="ENSP00000299576.5"/>
    <property type="gene ID" value="ENSG00000166452.12"/>
</dbReference>
<dbReference type="Ensembl" id="ENST00000309357.8">
    <molecule id="Q9NQ31-2"/>
    <property type="protein sequence ID" value="ENSP00000310644.4"/>
    <property type="gene ID" value="ENSG00000166452.12"/>
</dbReference>
<dbReference type="Ensembl" id="ENST00000309377.9">
    <molecule id="Q9NQ31-1"/>
    <property type="protein sequence ID" value="ENSP00000310459.4"/>
    <property type="gene ID" value="ENSG00000166452.12"/>
</dbReference>
<dbReference type="Ensembl" id="ENST00000396648.6">
    <molecule id="Q9NQ31-3"/>
    <property type="protein sequence ID" value="ENSP00000379885.2"/>
    <property type="gene ID" value="ENSG00000166452.12"/>
</dbReference>
<dbReference type="Ensembl" id="ENST00000534147.5">
    <molecule id="Q9NQ31-1"/>
    <property type="protein sequence ID" value="ENSP00000431331.1"/>
    <property type="gene ID" value="ENSG00000166452.12"/>
</dbReference>
<dbReference type="GeneID" id="56672"/>
<dbReference type="KEGG" id="hsa:56672"/>
<dbReference type="MANE-Select" id="ENST00000309377.9">
    <property type="protein sequence ID" value="ENSP00000310459.4"/>
    <property type="RefSeq nucleotide sequence ID" value="NM_020642.4"/>
    <property type="RefSeq protein sequence ID" value="NP_065693.2"/>
</dbReference>
<dbReference type="UCSC" id="uc001mgx.4">
    <molecule id="Q9NQ31-1"/>
    <property type="organism name" value="human"/>
</dbReference>
<dbReference type="AGR" id="HGNC:1170"/>
<dbReference type="CTD" id="56672"/>
<dbReference type="DisGeNET" id="56672"/>
<dbReference type="GeneCards" id="AKIP1"/>
<dbReference type="HGNC" id="HGNC:1170">
    <property type="gene designation" value="AKIP1"/>
</dbReference>
<dbReference type="HPA" id="ENSG00000166452">
    <property type="expression patterns" value="Low tissue specificity"/>
</dbReference>
<dbReference type="MIM" id="609191">
    <property type="type" value="gene"/>
</dbReference>
<dbReference type="neXtProt" id="NX_Q9NQ31"/>
<dbReference type="OpenTargets" id="ENSG00000166452"/>
<dbReference type="PharmGKB" id="PA25484"/>
<dbReference type="VEuPathDB" id="HostDB:ENSG00000166452"/>
<dbReference type="eggNOG" id="ENOG502S6M5">
    <property type="taxonomic scope" value="Eukaryota"/>
</dbReference>
<dbReference type="GeneTree" id="ENSGT00390000017064"/>
<dbReference type="HOGENOM" id="CLU_126629_1_0_1"/>
<dbReference type="InParanoid" id="Q9NQ31"/>
<dbReference type="OMA" id="RIMAEFM"/>
<dbReference type="OrthoDB" id="5945634at2759"/>
<dbReference type="PAN-GO" id="Q9NQ31">
    <property type="GO annotations" value="1 GO annotation based on evolutionary models"/>
</dbReference>
<dbReference type="PhylomeDB" id="Q9NQ31"/>
<dbReference type="TreeFam" id="TF337318"/>
<dbReference type="PathwayCommons" id="Q9NQ31"/>
<dbReference type="SignaLink" id="Q9NQ31"/>
<dbReference type="BioGRID-ORCS" id="56672">
    <property type="hits" value="20 hits in 1159 CRISPR screens"/>
</dbReference>
<dbReference type="ChiTaRS" id="AKIP1">
    <property type="organism name" value="human"/>
</dbReference>
<dbReference type="GenomeRNAi" id="56672"/>
<dbReference type="Pharos" id="Q9NQ31">
    <property type="development level" value="Tbio"/>
</dbReference>
<dbReference type="PRO" id="PR:Q9NQ31"/>
<dbReference type="Proteomes" id="UP000005640">
    <property type="component" value="Chromosome 11"/>
</dbReference>
<dbReference type="RNAct" id="Q9NQ31">
    <property type="molecule type" value="protein"/>
</dbReference>
<dbReference type="Bgee" id="ENSG00000166452">
    <property type="expression patterns" value="Expressed in oocyte and 178 other cell types or tissues"/>
</dbReference>
<dbReference type="ExpressionAtlas" id="Q9NQ31">
    <property type="expression patterns" value="baseline and differential"/>
</dbReference>
<dbReference type="GO" id="GO:0005654">
    <property type="term" value="C:nucleoplasm"/>
    <property type="evidence" value="ECO:0000314"/>
    <property type="project" value="HPA"/>
</dbReference>
<dbReference type="GO" id="GO:1901222">
    <property type="term" value="P:regulation of non-canonical NF-kappaB signal transduction"/>
    <property type="evidence" value="ECO:0007669"/>
    <property type="project" value="InterPro"/>
</dbReference>
<dbReference type="GO" id="GO:0034446">
    <property type="term" value="P:substrate adhesion-dependent cell spreading"/>
    <property type="evidence" value="ECO:0007669"/>
    <property type="project" value="Ensembl"/>
</dbReference>
<dbReference type="InterPro" id="IPR033214">
    <property type="entry name" value="AKIP1"/>
</dbReference>
<dbReference type="PANTHER" id="PTHR14330">
    <property type="entry name" value="A-KINASE-INTERACTING PROTEIN 1"/>
    <property type="match status" value="1"/>
</dbReference>
<dbReference type="PANTHER" id="PTHR14330:SF2">
    <property type="entry name" value="A-KINASE-INTERACTING PROTEIN 1"/>
    <property type="match status" value="1"/>
</dbReference>
<proteinExistence type="evidence at protein level"/>